<comment type="function">
    <text evidence="2">Catalyzes the NAD(P)(+)-dependent oxidative decarboxylation of the C4 methyl groups of 4-alpha-carboxysterols in post-squalene cholesterol biosynthesis.</text>
</comment>
<comment type="catalytic activity">
    <reaction evidence="3">
        <text>a 3beta-hydroxysteroid-4alpha-carboxylate + NADP(+) = a 3-oxosteroid + CO2 + NADPH</text>
        <dbReference type="Rhea" id="RHEA:34771"/>
        <dbReference type="ChEBI" id="CHEBI:16526"/>
        <dbReference type="ChEBI" id="CHEBI:47788"/>
        <dbReference type="ChEBI" id="CHEBI:57783"/>
        <dbReference type="ChEBI" id="CHEBI:58349"/>
        <dbReference type="ChEBI" id="CHEBI:136966"/>
        <dbReference type="EC" id="1.1.1.170"/>
    </reaction>
</comment>
<comment type="catalytic activity">
    <reaction evidence="3">
        <text>a 3beta-hydroxysteroid-4alpha-carboxylate + NAD(+) = a 3-oxosteroid + CO2 + NADH</text>
        <dbReference type="Rhea" id="RHEA:34775"/>
        <dbReference type="ChEBI" id="CHEBI:16526"/>
        <dbReference type="ChEBI" id="CHEBI:47788"/>
        <dbReference type="ChEBI" id="CHEBI:57540"/>
        <dbReference type="ChEBI" id="CHEBI:57945"/>
        <dbReference type="ChEBI" id="CHEBI:136966"/>
        <dbReference type="EC" id="1.1.1.170"/>
    </reaction>
</comment>
<comment type="pathway">
    <text>Steroid biosynthesis; zymosterol biosynthesis; zymosterol from lanosterol: step 4/6.</text>
</comment>
<comment type="subunit">
    <text evidence="2">Homodimer.</text>
</comment>
<comment type="subcellular location">
    <subcellularLocation>
        <location evidence="3">Endoplasmic reticulum membrane</location>
        <topology evidence="4">Single-pass membrane protein</topology>
    </subcellularLocation>
    <subcellularLocation>
        <location evidence="3">Lipid droplet</location>
    </subcellularLocation>
</comment>
<comment type="similarity">
    <text evidence="5">Belongs to the 3-beta-HSD family.</text>
</comment>
<feature type="chain" id="PRO_0000327832" description="Sterol-4-alpha-carboxylate 3-dehydrogenase, decarboxylating">
    <location>
        <begin position="1"/>
        <end position="328"/>
    </location>
</feature>
<feature type="transmembrane region" description="Helical" evidence="4">
    <location>
        <begin position="259"/>
        <end position="279"/>
    </location>
</feature>
<feature type="active site" description="Proton acceptor" evidence="1">
    <location>
        <position position="145"/>
    </location>
</feature>
<feature type="binding site" evidence="1">
    <location>
        <position position="149"/>
    </location>
    <ligand>
        <name>NAD(+)</name>
        <dbReference type="ChEBI" id="CHEBI:57540"/>
    </ligand>
</feature>
<evidence type="ECO:0000250" key="1">
    <source>
        <dbReference type="UniProtKB" id="Q12068"/>
    </source>
</evidence>
<evidence type="ECO:0000250" key="2">
    <source>
        <dbReference type="UniProtKB" id="Q15738"/>
    </source>
</evidence>
<evidence type="ECO:0000250" key="3">
    <source>
        <dbReference type="UniProtKB" id="Q9R1J0"/>
    </source>
</evidence>
<evidence type="ECO:0000255" key="4"/>
<evidence type="ECO:0000305" key="5"/>
<accession>Q54L85</accession>
<dbReference type="EC" id="1.1.1.170" evidence="3"/>
<dbReference type="EMBL" id="AAFI02000090">
    <property type="protein sequence ID" value="EAL64014.1"/>
    <property type="molecule type" value="Genomic_DNA"/>
</dbReference>
<dbReference type="RefSeq" id="XP_637518.1">
    <property type="nucleotide sequence ID" value="XM_632426.1"/>
</dbReference>
<dbReference type="SMR" id="Q54L85"/>
<dbReference type="STRING" id="44689.Q54L85"/>
<dbReference type="GlyGen" id="Q54L85">
    <property type="glycosylation" value="1 site"/>
</dbReference>
<dbReference type="PaxDb" id="44689-DDB0305146"/>
<dbReference type="EnsemblProtists" id="EAL64014">
    <property type="protein sequence ID" value="EAL64014"/>
    <property type="gene ID" value="DDB_G0286833"/>
</dbReference>
<dbReference type="GeneID" id="8625816"/>
<dbReference type="KEGG" id="ddi:DDB_G0286833"/>
<dbReference type="dictyBase" id="DDB_G0286833"/>
<dbReference type="VEuPathDB" id="AmoebaDB:DDB_G0286833"/>
<dbReference type="eggNOG" id="KOG1430">
    <property type="taxonomic scope" value="Eukaryota"/>
</dbReference>
<dbReference type="HOGENOM" id="CLU_007383_6_1_1"/>
<dbReference type="InParanoid" id="Q54L85"/>
<dbReference type="OMA" id="WFWIGGG"/>
<dbReference type="PhylomeDB" id="Q54L85"/>
<dbReference type="UniPathway" id="UPA00770">
    <property type="reaction ID" value="UER00757"/>
</dbReference>
<dbReference type="PRO" id="PR:Q54L85"/>
<dbReference type="Proteomes" id="UP000002195">
    <property type="component" value="Chromosome 4"/>
</dbReference>
<dbReference type="GO" id="GO:0005783">
    <property type="term" value="C:endoplasmic reticulum"/>
    <property type="evidence" value="ECO:0000250"/>
    <property type="project" value="UniProtKB"/>
</dbReference>
<dbReference type="GO" id="GO:0005789">
    <property type="term" value="C:endoplasmic reticulum membrane"/>
    <property type="evidence" value="ECO:0007669"/>
    <property type="project" value="UniProtKB-SubCell"/>
</dbReference>
<dbReference type="GO" id="GO:0005811">
    <property type="term" value="C:lipid droplet"/>
    <property type="evidence" value="ECO:0000250"/>
    <property type="project" value="UniProtKB"/>
</dbReference>
<dbReference type="GO" id="GO:0102175">
    <property type="term" value="F:3-beta-hydroxysteroid dehydrogenase (NAD+)/C4-decarboxylase activity"/>
    <property type="evidence" value="ECO:0007669"/>
    <property type="project" value="RHEA"/>
</dbReference>
<dbReference type="GO" id="GO:0008460">
    <property type="term" value="F:dTDP-glucose 4,6-dehydratase activity"/>
    <property type="evidence" value="ECO:0000318"/>
    <property type="project" value="GO_Central"/>
</dbReference>
<dbReference type="GO" id="GO:0006695">
    <property type="term" value="P:cholesterol biosynthetic process"/>
    <property type="evidence" value="ECO:0007669"/>
    <property type="project" value="UniProtKB-KW"/>
</dbReference>
<dbReference type="CDD" id="cd05263">
    <property type="entry name" value="MupV_like_SDR_e"/>
    <property type="match status" value="1"/>
</dbReference>
<dbReference type="Gene3D" id="3.40.50.720">
    <property type="entry name" value="NAD(P)-binding Rossmann-like Domain"/>
    <property type="match status" value="1"/>
</dbReference>
<dbReference type="InterPro" id="IPR002225">
    <property type="entry name" value="3Beta_OHSteriod_DH/Estase"/>
</dbReference>
<dbReference type="InterPro" id="IPR036291">
    <property type="entry name" value="NAD(P)-bd_dom_sf"/>
</dbReference>
<dbReference type="InterPro" id="IPR051783">
    <property type="entry name" value="NAD(P)-dependent_oxidoreduct"/>
</dbReference>
<dbReference type="PANTHER" id="PTHR48079:SF6">
    <property type="entry name" value="NAD(P)-BINDING DOMAIN-CONTAINING PROTEIN-RELATED"/>
    <property type="match status" value="1"/>
</dbReference>
<dbReference type="PANTHER" id="PTHR48079">
    <property type="entry name" value="PROTEIN YEEZ"/>
    <property type="match status" value="1"/>
</dbReference>
<dbReference type="Pfam" id="PF01073">
    <property type="entry name" value="3Beta_HSD"/>
    <property type="match status" value="1"/>
</dbReference>
<dbReference type="SUPFAM" id="SSF51735">
    <property type="entry name" value="NAD(P)-binding Rossmann-fold domains"/>
    <property type="match status" value="1"/>
</dbReference>
<organism>
    <name type="scientific">Dictyostelium discoideum</name>
    <name type="common">Social amoeba</name>
    <dbReference type="NCBI Taxonomy" id="44689"/>
    <lineage>
        <taxon>Eukaryota</taxon>
        <taxon>Amoebozoa</taxon>
        <taxon>Evosea</taxon>
        <taxon>Eumycetozoa</taxon>
        <taxon>Dictyostelia</taxon>
        <taxon>Dictyosteliales</taxon>
        <taxon>Dictyosteliaceae</taxon>
        <taxon>Dictyostelium</taxon>
    </lineage>
</organism>
<gene>
    <name type="primary">nsdhl</name>
    <name type="ORF">DDB_G0286833</name>
</gene>
<protein>
    <recommendedName>
        <fullName>Sterol-4-alpha-carboxylate 3-dehydrogenase, decarboxylating</fullName>
        <ecNumber evidence="3">1.1.1.170</ecNumber>
    </recommendedName>
</protein>
<sequence>MKNVFLTGGSGFLGKYIIEELISNGYKVFALSRSETSNKVLSQMGATPVMSSLHDEQGLTEAIKGCDIVIHCAAKLETNSESVQELYKDNIDATELLFNICNQSSTSSVSVFCFISSEGVIMNGENINNATEDTPYPPIEQLGWYNKSKAISEQFLLATQSSMSRMKTIVIRLPLVWGSRDNVLDYLVGLCNKFQWFWIGGGKNYLSIVHAKNASYGIRLAIEKGDNQDIFHLTDGESVQYRKFFTDRFKKKGVSTNKLHMVLPTPIALSLVWIMALIWKLFNLKGLPLLTKTGLIYSSKNFTINDDKARLKLGYTNKINYNQGMDEL</sequence>
<keyword id="KW-0152">Cholesterol biosynthesis</keyword>
<keyword id="KW-0153">Cholesterol metabolism</keyword>
<keyword id="KW-0256">Endoplasmic reticulum</keyword>
<keyword id="KW-0444">Lipid biosynthesis</keyword>
<keyword id="KW-0551">Lipid droplet</keyword>
<keyword id="KW-0443">Lipid metabolism</keyword>
<keyword id="KW-0472">Membrane</keyword>
<keyword id="KW-0520">NAD</keyword>
<keyword id="KW-0560">Oxidoreductase</keyword>
<keyword id="KW-1185">Reference proteome</keyword>
<keyword id="KW-0752">Steroid biosynthesis</keyword>
<keyword id="KW-0753">Steroid metabolism</keyword>
<keyword id="KW-0756">Sterol biosynthesis</keyword>
<keyword id="KW-1207">Sterol metabolism</keyword>
<keyword id="KW-0812">Transmembrane</keyword>
<keyword id="KW-1133">Transmembrane helix</keyword>
<name>NSDHL_DICDI</name>
<reference key="1">
    <citation type="journal article" date="2005" name="Nature">
        <title>The genome of the social amoeba Dictyostelium discoideum.</title>
        <authorList>
            <person name="Eichinger L."/>
            <person name="Pachebat J.A."/>
            <person name="Gloeckner G."/>
            <person name="Rajandream M.A."/>
            <person name="Sucgang R."/>
            <person name="Berriman M."/>
            <person name="Song J."/>
            <person name="Olsen R."/>
            <person name="Szafranski K."/>
            <person name="Xu Q."/>
            <person name="Tunggal B."/>
            <person name="Kummerfeld S."/>
            <person name="Madera M."/>
            <person name="Konfortov B.A."/>
            <person name="Rivero F."/>
            <person name="Bankier A.T."/>
            <person name="Lehmann R."/>
            <person name="Hamlin N."/>
            <person name="Davies R."/>
            <person name="Gaudet P."/>
            <person name="Fey P."/>
            <person name="Pilcher K."/>
            <person name="Chen G."/>
            <person name="Saunders D."/>
            <person name="Sodergren E.J."/>
            <person name="Davis P."/>
            <person name="Kerhornou A."/>
            <person name="Nie X."/>
            <person name="Hall N."/>
            <person name="Anjard C."/>
            <person name="Hemphill L."/>
            <person name="Bason N."/>
            <person name="Farbrother P."/>
            <person name="Desany B."/>
            <person name="Just E."/>
            <person name="Morio T."/>
            <person name="Rost R."/>
            <person name="Churcher C.M."/>
            <person name="Cooper J."/>
            <person name="Haydock S."/>
            <person name="van Driessche N."/>
            <person name="Cronin A."/>
            <person name="Goodhead I."/>
            <person name="Muzny D.M."/>
            <person name="Mourier T."/>
            <person name="Pain A."/>
            <person name="Lu M."/>
            <person name="Harper D."/>
            <person name="Lindsay R."/>
            <person name="Hauser H."/>
            <person name="James K.D."/>
            <person name="Quiles M."/>
            <person name="Madan Babu M."/>
            <person name="Saito T."/>
            <person name="Buchrieser C."/>
            <person name="Wardroper A."/>
            <person name="Felder M."/>
            <person name="Thangavelu M."/>
            <person name="Johnson D."/>
            <person name="Knights A."/>
            <person name="Loulseged H."/>
            <person name="Mungall K.L."/>
            <person name="Oliver K."/>
            <person name="Price C."/>
            <person name="Quail M.A."/>
            <person name="Urushihara H."/>
            <person name="Hernandez J."/>
            <person name="Rabbinowitsch E."/>
            <person name="Steffen D."/>
            <person name="Sanders M."/>
            <person name="Ma J."/>
            <person name="Kohara Y."/>
            <person name="Sharp S."/>
            <person name="Simmonds M.N."/>
            <person name="Spiegler S."/>
            <person name="Tivey A."/>
            <person name="Sugano S."/>
            <person name="White B."/>
            <person name="Walker D."/>
            <person name="Woodward J.R."/>
            <person name="Winckler T."/>
            <person name="Tanaka Y."/>
            <person name="Shaulsky G."/>
            <person name="Schleicher M."/>
            <person name="Weinstock G.M."/>
            <person name="Rosenthal A."/>
            <person name="Cox E.C."/>
            <person name="Chisholm R.L."/>
            <person name="Gibbs R.A."/>
            <person name="Loomis W.F."/>
            <person name="Platzer M."/>
            <person name="Kay R.R."/>
            <person name="Williams J.G."/>
            <person name="Dear P.H."/>
            <person name="Noegel A.A."/>
            <person name="Barrell B.G."/>
            <person name="Kuspa A."/>
        </authorList>
    </citation>
    <scope>NUCLEOTIDE SEQUENCE [LARGE SCALE GENOMIC DNA]</scope>
    <source>
        <strain>AX4</strain>
    </source>
</reference>
<proteinExistence type="inferred from homology"/>